<feature type="peptide" id="PRO_1000188771" description="thr operon leader peptide">
    <location>
        <begin position="1"/>
        <end position="21"/>
    </location>
</feature>
<sequence length="21" mass="2138">MKRISTTITTTITITTGNGAG</sequence>
<gene>
    <name evidence="1" type="primary">thrL</name>
    <name type="ordered locus">ECS88_5086</name>
</gene>
<organism>
    <name type="scientific">Escherichia coli O45:K1 (strain S88 / ExPEC)</name>
    <dbReference type="NCBI Taxonomy" id="585035"/>
    <lineage>
        <taxon>Bacteria</taxon>
        <taxon>Pseudomonadati</taxon>
        <taxon>Pseudomonadota</taxon>
        <taxon>Gammaproteobacteria</taxon>
        <taxon>Enterobacterales</taxon>
        <taxon>Enterobacteriaceae</taxon>
        <taxon>Escherichia</taxon>
    </lineage>
</organism>
<evidence type="ECO:0000255" key="1">
    <source>
        <dbReference type="HAMAP-Rule" id="MF_01907"/>
    </source>
</evidence>
<accession>B7MD04</accession>
<name>LPT_ECO45</name>
<proteinExistence type="inferred from homology"/>
<dbReference type="EMBL" id="CU928161">
    <property type="protein sequence ID" value="CAV02568.1"/>
    <property type="molecule type" value="Genomic_DNA"/>
</dbReference>
<dbReference type="RefSeq" id="WP_001386572.1">
    <property type="nucleotide sequence ID" value="NC_011742.1"/>
</dbReference>
<dbReference type="GeneID" id="93777441"/>
<dbReference type="KEGG" id="ecz:ECS88_5086"/>
<dbReference type="HOGENOM" id="CLU_221491_0_1_6"/>
<dbReference type="Proteomes" id="UP000000747">
    <property type="component" value="Chromosome"/>
</dbReference>
<dbReference type="GO" id="GO:0009088">
    <property type="term" value="P:threonine biosynthetic process"/>
    <property type="evidence" value="ECO:0007669"/>
    <property type="project" value="UniProtKB-UniRule"/>
</dbReference>
<dbReference type="GO" id="GO:0031556">
    <property type="term" value="P:transcriptional attenuation by ribosome"/>
    <property type="evidence" value="ECO:0007669"/>
    <property type="project" value="UniProtKB-UniRule"/>
</dbReference>
<dbReference type="HAMAP" id="MF_01907">
    <property type="entry name" value="Leader_Thr"/>
    <property type="match status" value="1"/>
</dbReference>
<dbReference type="InterPro" id="IPR011720">
    <property type="entry name" value="Thr_lead_pept"/>
</dbReference>
<dbReference type="NCBIfam" id="NF007329">
    <property type="entry name" value="PRK09816.1"/>
    <property type="match status" value="1"/>
</dbReference>
<dbReference type="NCBIfam" id="TIGR02077">
    <property type="entry name" value="thr_lead_pep"/>
    <property type="match status" value="1"/>
</dbReference>
<dbReference type="Pfam" id="PF08254">
    <property type="entry name" value="Leader_Thr"/>
    <property type="match status" value="1"/>
</dbReference>
<reference key="1">
    <citation type="journal article" date="2009" name="PLoS Genet.">
        <title>Organised genome dynamics in the Escherichia coli species results in highly diverse adaptive paths.</title>
        <authorList>
            <person name="Touchon M."/>
            <person name="Hoede C."/>
            <person name="Tenaillon O."/>
            <person name="Barbe V."/>
            <person name="Baeriswyl S."/>
            <person name="Bidet P."/>
            <person name="Bingen E."/>
            <person name="Bonacorsi S."/>
            <person name="Bouchier C."/>
            <person name="Bouvet O."/>
            <person name="Calteau A."/>
            <person name="Chiapello H."/>
            <person name="Clermont O."/>
            <person name="Cruveiller S."/>
            <person name="Danchin A."/>
            <person name="Diard M."/>
            <person name="Dossat C."/>
            <person name="Karoui M.E."/>
            <person name="Frapy E."/>
            <person name="Garry L."/>
            <person name="Ghigo J.M."/>
            <person name="Gilles A.M."/>
            <person name="Johnson J."/>
            <person name="Le Bouguenec C."/>
            <person name="Lescat M."/>
            <person name="Mangenot S."/>
            <person name="Martinez-Jehanne V."/>
            <person name="Matic I."/>
            <person name="Nassif X."/>
            <person name="Oztas S."/>
            <person name="Petit M.A."/>
            <person name="Pichon C."/>
            <person name="Rouy Z."/>
            <person name="Ruf C.S."/>
            <person name="Schneider D."/>
            <person name="Tourret J."/>
            <person name="Vacherie B."/>
            <person name="Vallenet D."/>
            <person name="Medigue C."/>
            <person name="Rocha E.P.C."/>
            <person name="Denamur E."/>
        </authorList>
    </citation>
    <scope>NUCLEOTIDE SEQUENCE [LARGE SCALE GENOMIC DNA]</scope>
    <source>
        <strain>S88 / ExPEC</strain>
    </source>
</reference>
<keyword id="KW-0028">Amino-acid biosynthesis</keyword>
<keyword id="KW-0428">Leader peptide</keyword>
<keyword id="KW-1185">Reference proteome</keyword>
<keyword id="KW-0791">Threonine biosynthesis</keyword>
<comment type="function">
    <text evidence="1">This protein is involved in control of the biosynthesis of threonine.</text>
</comment>
<comment type="similarity">
    <text evidence="1">Belongs to the thr operon leader peptide family.</text>
</comment>
<protein>
    <recommendedName>
        <fullName evidence="1">thr operon leader peptide</fullName>
    </recommendedName>
    <alternativeName>
        <fullName evidence="1">thr operon attenuator</fullName>
    </alternativeName>
</protein>